<name>GYAR_PYRHO</name>
<proteinExistence type="evidence at protein level"/>
<gene>
    <name type="primary">gyaR</name>
    <name type="ordered locus">PH0597</name>
</gene>
<organism>
    <name type="scientific">Pyrococcus horikoshii (strain ATCC 700860 / DSM 12428 / JCM 9974 / NBRC 100139 / OT-3)</name>
    <dbReference type="NCBI Taxonomy" id="70601"/>
    <lineage>
        <taxon>Archaea</taxon>
        <taxon>Methanobacteriati</taxon>
        <taxon>Methanobacteriota</taxon>
        <taxon>Thermococci</taxon>
        <taxon>Thermococcales</taxon>
        <taxon>Thermococcaceae</taxon>
        <taxon>Pyrococcus</taxon>
    </lineage>
</organism>
<comment type="catalytic activity">
    <reaction>
        <text>glycolate + NAD(+) = glyoxylate + NADH + H(+)</text>
        <dbReference type="Rhea" id="RHEA:18229"/>
        <dbReference type="ChEBI" id="CHEBI:15378"/>
        <dbReference type="ChEBI" id="CHEBI:29805"/>
        <dbReference type="ChEBI" id="CHEBI:36655"/>
        <dbReference type="ChEBI" id="CHEBI:57540"/>
        <dbReference type="ChEBI" id="CHEBI:57945"/>
        <dbReference type="EC" id="1.1.1.26"/>
    </reaction>
</comment>
<comment type="subunit">
    <text evidence="1">Homodimer.</text>
</comment>
<comment type="subcellular location">
    <subcellularLocation>
        <location evidence="1">Cytoplasm</location>
    </subcellularLocation>
</comment>
<comment type="similarity">
    <text evidence="3">Belongs to the D-isomer specific 2-hydroxyacid dehydrogenase family. GyaR subfamily.</text>
</comment>
<comment type="sequence caution" evidence="3">
    <conflict type="erroneous initiation">
        <sequence resource="EMBL-CDS" id="BAA29686"/>
    </conflict>
</comment>
<reference key="1">
    <citation type="journal article" date="1998" name="DNA Res.">
        <title>Complete sequence and gene organization of the genome of a hyper-thermophilic archaebacterium, Pyrococcus horikoshii OT3.</title>
        <authorList>
            <person name="Kawarabayasi Y."/>
            <person name="Sawada M."/>
            <person name="Horikawa H."/>
            <person name="Haikawa Y."/>
            <person name="Hino Y."/>
            <person name="Yamamoto S."/>
            <person name="Sekine M."/>
            <person name="Baba S."/>
            <person name="Kosugi H."/>
            <person name="Hosoyama A."/>
            <person name="Nagai Y."/>
            <person name="Sakai M."/>
            <person name="Ogura K."/>
            <person name="Otsuka R."/>
            <person name="Nakazawa H."/>
            <person name="Takamiya M."/>
            <person name="Ohfuku Y."/>
            <person name="Funahashi T."/>
            <person name="Tanaka T."/>
            <person name="Kudoh Y."/>
            <person name="Yamazaki J."/>
            <person name="Kushida N."/>
            <person name="Oguchi A."/>
            <person name="Aoki K."/>
            <person name="Yoshizawa T."/>
            <person name="Nakamura Y."/>
            <person name="Robb F.T."/>
            <person name="Horikoshi K."/>
            <person name="Masuchi Y."/>
            <person name="Shizuya H."/>
            <person name="Kikuchi H."/>
        </authorList>
    </citation>
    <scope>NUCLEOTIDE SEQUENCE [LARGE SCALE GENOMIC DNA]</scope>
    <source>
        <strain>ATCC 700860 / DSM 12428 / JCM 9974 / NBRC 100139 / OT-3</strain>
    </source>
</reference>
<reference key="2">
    <citation type="submission" date="2006-06" db="PDB data bank">
        <title>Crystal structure of glyoxylate reductase (ph0597) from Pyrococcus horikoshii OT3, complexed with nadp (i41).</title>
        <authorList>
            <consortium name="RIKEN structural genomics initiative (RSGI)"/>
        </authorList>
    </citation>
    <scope>X-RAY CRYSTALLOGRAPHY (1.7 ANGSTROMS) IN COMPLEX WITH NADP</scope>
    <source>
        <strain>ATCC 700860 / DSM 12428 / JCM 9974 / NBRC 100139 / OT-3</strain>
    </source>
</reference>
<accession>O58320</accession>
<evidence type="ECO:0000250" key="1"/>
<evidence type="ECO:0000269" key="2">
    <source ref="2"/>
</evidence>
<evidence type="ECO:0000305" key="3"/>
<evidence type="ECO:0007829" key="4">
    <source>
        <dbReference type="PDB" id="2DBQ"/>
    </source>
</evidence>
<evidence type="ECO:0007829" key="5">
    <source>
        <dbReference type="PDB" id="2DBR"/>
    </source>
</evidence>
<evidence type="ECO:0007829" key="6">
    <source>
        <dbReference type="PDB" id="2DBZ"/>
    </source>
</evidence>
<keyword id="KW-0002">3D-structure</keyword>
<keyword id="KW-0963">Cytoplasm</keyword>
<keyword id="KW-0520">NAD</keyword>
<keyword id="KW-0560">Oxidoreductase</keyword>
<dbReference type="EC" id="1.1.1.26"/>
<dbReference type="EMBL" id="BA000001">
    <property type="protein sequence ID" value="BAA29686.1"/>
    <property type="status" value="ALT_INIT"/>
    <property type="molecule type" value="Genomic_DNA"/>
</dbReference>
<dbReference type="PIR" id="A71175">
    <property type="entry name" value="A71175"/>
</dbReference>
<dbReference type="RefSeq" id="WP_010884698.1">
    <property type="nucleotide sequence ID" value="NC_000961.1"/>
</dbReference>
<dbReference type="PDB" id="2DBQ">
    <property type="method" value="X-ray"/>
    <property type="resolution" value="1.70 A"/>
    <property type="chains" value="A=1-334"/>
</dbReference>
<dbReference type="PDB" id="2DBR">
    <property type="method" value="X-ray"/>
    <property type="resolution" value="2.61 A"/>
    <property type="chains" value="A/B/C/D/E/F=1-334"/>
</dbReference>
<dbReference type="PDB" id="2DBZ">
    <property type="method" value="X-ray"/>
    <property type="resolution" value="2.45 A"/>
    <property type="chains" value="A/B=1-334"/>
</dbReference>
<dbReference type="PDBsum" id="2DBQ"/>
<dbReference type="PDBsum" id="2DBR"/>
<dbReference type="PDBsum" id="2DBZ"/>
<dbReference type="SMR" id="O58320"/>
<dbReference type="STRING" id="70601.gene:9377537"/>
<dbReference type="EnsemblBacteria" id="BAA29686">
    <property type="protein sequence ID" value="BAA29686"/>
    <property type="gene ID" value="BAA29686"/>
</dbReference>
<dbReference type="GeneID" id="1442932"/>
<dbReference type="KEGG" id="pho:PH0597"/>
<dbReference type="eggNOG" id="arCOG01755">
    <property type="taxonomic scope" value="Archaea"/>
</dbReference>
<dbReference type="OrthoDB" id="34275at2157"/>
<dbReference type="EvolutionaryTrace" id="O58320"/>
<dbReference type="Proteomes" id="UP000000752">
    <property type="component" value="Chromosome"/>
</dbReference>
<dbReference type="GO" id="GO:0005829">
    <property type="term" value="C:cytosol"/>
    <property type="evidence" value="ECO:0007669"/>
    <property type="project" value="TreeGrafter"/>
</dbReference>
<dbReference type="GO" id="GO:0047964">
    <property type="term" value="F:glyoxylate reductase (NADH) activity"/>
    <property type="evidence" value="ECO:0007669"/>
    <property type="project" value="UniProtKB-UniRule"/>
</dbReference>
<dbReference type="GO" id="GO:0030267">
    <property type="term" value="F:glyoxylate reductase (NADPH) activity"/>
    <property type="evidence" value="ECO:0007669"/>
    <property type="project" value="TreeGrafter"/>
</dbReference>
<dbReference type="GO" id="GO:0016618">
    <property type="term" value="F:hydroxypyruvate reductase [NAD(P)H] activity"/>
    <property type="evidence" value="ECO:0007669"/>
    <property type="project" value="TreeGrafter"/>
</dbReference>
<dbReference type="GO" id="GO:0051287">
    <property type="term" value="F:NAD binding"/>
    <property type="evidence" value="ECO:0007669"/>
    <property type="project" value="InterPro"/>
</dbReference>
<dbReference type="CDD" id="cd05301">
    <property type="entry name" value="GDH"/>
    <property type="match status" value="1"/>
</dbReference>
<dbReference type="FunFam" id="3.40.50.720:FF:000462">
    <property type="entry name" value="Glyoxylate reductase (NADP+)"/>
    <property type="match status" value="1"/>
</dbReference>
<dbReference type="Gene3D" id="3.40.50.720">
    <property type="entry name" value="NAD(P)-binding Rossmann-like Domain"/>
    <property type="match status" value="2"/>
</dbReference>
<dbReference type="HAMAP" id="MF_00776">
    <property type="entry name" value="GyaR"/>
    <property type="match status" value="1"/>
</dbReference>
<dbReference type="InterPro" id="IPR050223">
    <property type="entry name" value="D-isomer_2-hydroxyacid_DH"/>
</dbReference>
<dbReference type="InterPro" id="IPR006139">
    <property type="entry name" value="D-isomer_2_OHA_DH_cat_dom"/>
</dbReference>
<dbReference type="InterPro" id="IPR029753">
    <property type="entry name" value="D-isomer_DH_CS"/>
</dbReference>
<dbReference type="InterPro" id="IPR029752">
    <property type="entry name" value="D-isomer_DH_CS1"/>
</dbReference>
<dbReference type="InterPro" id="IPR006140">
    <property type="entry name" value="D-isomer_DH_NAD-bd"/>
</dbReference>
<dbReference type="InterPro" id="IPR023519">
    <property type="entry name" value="Glyoxylate_reductase_GyaR"/>
</dbReference>
<dbReference type="InterPro" id="IPR036291">
    <property type="entry name" value="NAD(P)-bd_dom_sf"/>
</dbReference>
<dbReference type="NCBIfam" id="NF009714">
    <property type="entry name" value="PRK13243.1"/>
    <property type="match status" value="1"/>
</dbReference>
<dbReference type="PANTHER" id="PTHR10996">
    <property type="entry name" value="2-HYDROXYACID DEHYDROGENASE-RELATED"/>
    <property type="match status" value="1"/>
</dbReference>
<dbReference type="PANTHER" id="PTHR10996:SF283">
    <property type="entry name" value="GLYOXYLATE_HYDROXYPYRUVATE REDUCTASE B"/>
    <property type="match status" value="1"/>
</dbReference>
<dbReference type="Pfam" id="PF00389">
    <property type="entry name" value="2-Hacid_dh"/>
    <property type="match status" value="1"/>
</dbReference>
<dbReference type="Pfam" id="PF02826">
    <property type="entry name" value="2-Hacid_dh_C"/>
    <property type="match status" value="1"/>
</dbReference>
<dbReference type="SUPFAM" id="SSF52283">
    <property type="entry name" value="Formate/glycerate dehydrogenase catalytic domain-like"/>
    <property type="match status" value="1"/>
</dbReference>
<dbReference type="SUPFAM" id="SSF51735">
    <property type="entry name" value="NAD(P)-binding Rossmann-fold domains"/>
    <property type="match status" value="1"/>
</dbReference>
<dbReference type="PROSITE" id="PS00065">
    <property type="entry name" value="D_2_HYDROXYACID_DH_1"/>
    <property type="match status" value="1"/>
</dbReference>
<dbReference type="PROSITE" id="PS00671">
    <property type="entry name" value="D_2_HYDROXYACID_DH_3"/>
    <property type="match status" value="1"/>
</dbReference>
<protein>
    <recommendedName>
        <fullName>Glyoxylate reductase</fullName>
        <ecNumber>1.1.1.26</ecNumber>
    </recommendedName>
</protein>
<sequence>MKPKVFITREIPEVGIKMLEDEFEVEVWGDEKEIPREILLKKVKEVDALVTMLSERIDKEVFENAPKLRIVANYAVGYDNIDIEEATKRGIYVTNTPDVLTDATADLAFALLLATARHVVKGDRFVRSGEWKKRGVAWHPKWFLGYDVYGKTIGIIGLGRIGQAIAKRAKGFNMRILYYSRTRKEEVERELNAEFKPLEDLLRESDFVVLAVPLTRETYHLINEERLKLMKKTAILINIARGKVVDTNALVKALKEGWIAGAGLDVFEEEPYYNEELFKLDNVVLTPHIGSASFGAREGMAELVAKNLIAFKRGEIPPTLVNREVIKIRKPGFE</sequence>
<feature type="chain" id="PRO_0000075949" description="Glyoxylate reductase">
    <location>
        <begin position="1"/>
        <end position="334"/>
    </location>
</feature>
<feature type="active site" evidence="1">
    <location>
        <position position="241"/>
    </location>
</feature>
<feature type="active site" evidence="1">
    <location>
        <position position="270"/>
    </location>
</feature>
<feature type="active site" description="Proton donor" evidence="1">
    <location>
        <position position="288"/>
    </location>
</feature>
<feature type="binding site" evidence="2">
    <location>
        <begin position="158"/>
        <end position="161"/>
    </location>
    <ligand>
        <name>NADP(+)</name>
        <dbReference type="ChEBI" id="CHEBI:58349"/>
    </ligand>
</feature>
<feature type="binding site" evidence="2">
    <location>
        <begin position="180"/>
        <end position="182"/>
    </location>
    <ligand>
        <name>NADP(+)</name>
        <dbReference type="ChEBI" id="CHEBI:58349"/>
    </ligand>
</feature>
<feature type="binding site" evidence="2">
    <location>
        <begin position="239"/>
        <end position="241"/>
    </location>
    <ligand>
        <name>NADP(+)</name>
        <dbReference type="ChEBI" id="CHEBI:58349"/>
    </ligand>
</feature>
<feature type="binding site" evidence="2">
    <location>
        <begin position="288"/>
        <end position="290"/>
    </location>
    <ligand>
        <name>NADP(+)</name>
        <dbReference type="ChEBI" id="CHEBI:58349"/>
    </ligand>
</feature>
<feature type="strand" evidence="4">
    <location>
        <begin position="4"/>
        <end position="9"/>
    </location>
</feature>
<feature type="helix" evidence="4">
    <location>
        <begin position="13"/>
        <end position="20"/>
    </location>
</feature>
<feature type="strand" evidence="4">
    <location>
        <begin position="23"/>
        <end position="27"/>
    </location>
</feature>
<feature type="strand" evidence="6">
    <location>
        <begin position="30"/>
        <end position="32"/>
    </location>
</feature>
<feature type="helix" evidence="4">
    <location>
        <begin position="36"/>
        <end position="42"/>
    </location>
</feature>
<feature type="turn" evidence="6">
    <location>
        <begin position="43"/>
        <end position="45"/>
    </location>
</feature>
<feature type="strand" evidence="4">
    <location>
        <begin position="47"/>
        <end position="51"/>
    </location>
</feature>
<feature type="helix" evidence="4">
    <location>
        <begin position="59"/>
        <end position="63"/>
    </location>
</feature>
<feature type="strand" evidence="4">
    <location>
        <begin position="70"/>
        <end position="76"/>
    </location>
</feature>
<feature type="helix" evidence="4">
    <location>
        <begin position="83"/>
        <end position="88"/>
    </location>
</feature>
<feature type="strand" evidence="4">
    <location>
        <begin position="92"/>
        <end position="94"/>
    </location>
</feature>
<feature type="strand" evidence="6">
    <location>
        <begin position="98"/>
        <end position="100"/>
    </location>
</feature>
<feature type="helix" evidence="4">
    <location>
        <begin position="101"/>
        <end position="117"/>
    </location>
</feature>
<feature type="helix" evidence="4">
    <location>
        <begin position="119"/>
        <end position="127"/>
    </location>
</feature>
<feature type="helix" evidence="4">
    <location>
        <begin position="130"/>
        <end position="133"/>
    </location>
</feature>
<feature type="turn" evidence="4">
    <location>
        <begin position="140"/>
        <end position="143"/>
    </location>
</feature>
<feature type="strand" evidence="4">
    <location>
        <begin position="152"/>
        <end position="156"/>
    </location>
</feature>
<feature type="helix" evidence="4">
    <location>
        <begin position="160"/>
        <end position="171"/>
    </location>
</feature>
<feature type="strand" evidence="4">
    <location>
        <begin position="175"/>
        <end position="179"/>
    </location>
</feature>
<feature type="strand" evidence="5">
    <location>
        <begin position="181"/>
        <end position="184"/>
    </location>
</feature>
<feature type="helix" evidence="4">
    <location>
        <begin position="185"/>
        <end position="191"/>
    </location>
</feature>
<feature type="strand" evidence="6">
    <location>
        <begin position="193"/>
        <end position="195"/>
    </location>
</feature>
<feature type="helix" evidence="4">
    <location>
        <begin position="198"/>
        <end position="204"/>
    </location>
</feature>
<feature type="strand" evidence="4">
    <location>
        <begin position="206"/>
        <end position="210"/>
    </location>
</feature>
<feature type="turn" evidence="4">
    <location>
        <begin position="216"/>
        <end position="220"/>
    </location>
</feature>
<feature type="helix" evidence="4">
    <location>
        <begin position="224"/>
        <end position="229"/>
    </location>
</feature>
<feature type="strand" evidence="4">
    <location>
        <begin position="235"/>
        <end position="238"/>
    </location>
</feature>
<feature type="helix" evidence="4">
    <location>
        <begin position="242"/>
        <end position="244"/>
    </location>
</feature>
<feature type="helix" evidence="4">
    <location>
        <begin position="247"/>
        <end position="255"/>
    </location>
</feature>
<feature type="strand" evidence="4">
    <location>
        <begin position="258"/>
        <end position="265"/>
    </location>
</feature>
<feature type="strand" evidence="4">
    <location>
        <begin position="268"/>
        <end position="271"/>
    </location>
</feature>
<feature type="helix" evidence="4">
    <location>
        <begin position="275"/>
        <end position="279"/>
    </location>
</feature>
<feature type="strand" evidence="4">
    <location>
        <begin position="283"/>
        <end position="285"/>
    </location>
</feature>
<feature type="helix" evidence="4">
    <location>
        <begin position="294"/>
        <end position="312"/>
    </location>
</feature>
<feature type="helix" evidence="4">
    <location>
        <begin position="325"/>
        <end position="328"/>
    </location>
</feature>